<gene>
    <name evidence="1" type="primary">ihfB</name>
    <name evidence="1" type="synonym">himD</name>
    <name type="ordered locus">RPB_0638</name>
</gene>
<organism>
    <name type="scientific">Rhodopseudomonas palustris (strain HaA2)</name>
    <dbReference type="NCBI Taxonomy" id="316058"/>
    <lineage>
        <taxon>Bacteria</taxon>
        <taxon>Pseudomonadati</taxon>
        <taxon>Pseudomonadota</taxon>
        <taxon>Alphaproteobacteria</taxon>
        <taxon>Hyphomicrobiales</taxon>
        <taxon>Nitrobacteraceae</taxon>
        <taxon>Rhodopseudomonas</taxon>
    </lineage>
</organism>
<accession>Q2J2G1</accession>
<reference key="1">
    <citation type="submission" date="2006-01" db="EMBL/GenBank/DDBJ databases">
        <title>Complete sequence of Rhodopseudomonas palustris HaA2.</title>
        <authorList>
            <consortium name="US DOE Joint Genome Institute"/>
            <person name="Copeland A."/>
            <person name="Lucas S."/>
            <person name="Lapidus A."/>
            <person name="Barry K."/>
            <person name="Detter J.C."/>
            <person name="Glavina T."/>
            <person name="Hammon N."/>
            <person name="Israni S."/>
            <person name="Pitluck S."/>
            <person name="Chain P."/>
            <person name="Malfatti S."/>
            <person name="Shin M."/>
            <person name="Vergez L."/>
            <person name="Schmutz J."/>
            <person name="Larimer F."/>
            <person name="Land M."/>
            <person name="Hauser L."/>
            <person name="Pelletier D.A."/>
            <person name="Kyrpides N."/>
            <person name="Anderson I."/>
            <person name="Oda Y."/>
            <person name="Harwood C.S."/>
            <person name="Richardson P."/>
        </authorList>
    </citation>
    <scope>NUCLEOTIDE SEQUENCE [LARGE SCALE GENOMIC DNA]</scope>
    <source>
        <strain>HaA2</strain>
    </source>
</reference>
<comment type="function">
    <text evidence="1">This protein is one of the two subunits of integration host factor, a specific DNA-binding protein that functions in genetic recombination as well as in transcriptional and translational control.</text>
</comment>
<comment type="subunit">
    <text evidence="1">Heterodimer of an alpha and a beta chain.</text>
</comment>
<comment type="similarity">
    <text evidence="1">Belongs to the bacterial histone-like protein family.</text>
</comment>
<dbReference type="EMBL" id="CP000250">
    <property type="protein sequence ID" value="ABD05349.1"/>
    <property type="molecule type" value="Genomic_DNA"/>
</dbReference>
<dbReference type="RefSeq" id="WP_011439539.1">
    <property type="nucleotide sequence ID" value="NC_007778.1"/>
</dbReference>
<dbReference type="SMR" id="Q2J2G1"/>
<dbReference type="STRING" id="316058.RPB_0638"/>
<dbReference type="KEGG" id="rpb:RPB_0638"/>
<dbReference type="eggNOG" id="COG0776">
    <property type="taxonomic scope" value="Bacteria"/>
</dbReference>
<dbReference type="HOGENOM" id="CLU_105066_2_0_5"/>
<dbReference type="OrthoDB" id="9804203at2"/>
<dbReference type="Proteomes" id="UP000008809">
    <property type="component" value="Chromosome"/>
</dbReference>
<dbReference type="GO" id="GO:0005694">
    <property type="term" value="C:chromosome"/>
    <property type="evidence" value="ECO:0007669"/>
    <property type="project" value="InterPro"/>
</dbReference>
<dbReference type="GO" id="GO:0005829">
    <property type="term" value="C:cytosol"/>
    <property type="evidence" value="ECO:0007669"/>
    <property type="project" value="TreeGrafter"/>
</dbReference>
<dbReference type="GO" id="GO:0003677">
    <property type="term" value="F:DNA binding"/>
    <property type="evidence" value="ECO:0007669"/>
    <property type="project" value="UniProtKB-UniRule"/>
</dbReference>
<dbReference type="GO" id="GO:0030527">
    <property type="term" value="F:structural constituent of chromatin"/>
    <property type="evidence" value="ECO:0007669"/>
    <property type="project" value="InterPro"/>
</dbReference>
<dbReference type="GO" id="GO:0006310">
    <property type="term" value="P:DNA recombination"/>
    <property type="evidence" value="ECO:0007669"/>
    <property type="project" value="UniProtKB-UniRule"/>
</dbReference>
<dbReference type="GO" id="GO:0006355">
    <property type="term" value="P:regulation of DNA-templated transcription"/>
    <property type="evidence" value="ECO:0007669"/>
    <property type="project" value="UniProtKB-UniRule"/>
</dbReference>
<dbReference type="GO" id="GO:0006417">
    <property type="term" value="P:regulation of translation"/>
    <property type="evidence" value="ECO:0007669"/>
    <property type="project" value="UniProtKB-UniRule"/>
</dbReference>
<dbReference type="CDD" id="cd13836">
    <property type="entry name" value="IHF_B"/>
    <property type="match status" value="1"/>
</dbReference>
<dbReference type="FunFam" id="4.10.520.10:FF:000008">
    <property type="entry name" value="Integration host factor subunit beta"/>
    <property type="match status" value="1"/>
</dbReference>
<dbReference type="Gene3D" id="4.10.520.10">
    <property type="entry name" value="IHF-like DNA-binding proteins"/>
    <property type="match status" value="1"/>
</dbReference>
<dbReference type="HAMAP" id="MF_00381">
    <property type="entry name" value="IHF_beta"/>
    <property type="match status" value="1"/>
</dbReference>
<dbReference type="InterPro" id="IPR000119">
    <property type="entry name" value="Hist_DNA-bd"/>
</dbReference>
<dbReference type="InterPro" id="IPR020816">
    <property type="entry name" value="Histone-like_DNA-bd_CS"/>
</dbReference>
<dbReference type="InterPro" id="IPR010992">
    <property type="entry name" value="IHF-like_DNA-bd_dom_sf"/>
</dbReference>
<dbReference type="InterPro" id="IPR005685">
    <property type="entry name" value="IHF_beta"/>
</dbReference>
<dbReference type="NCBIfam" id="TIGR00988">
    <property type="entry name" value="hip"/>
    <property type="match status" value="1"/>
</dbReference>
<dbReference type="NCBIfam" id="NF001222">
    <property type="entry name" value="PRK00199.1"/>
    <property type="match status" value="1"/>
</dbReference>
<dbReference type="PANTHER" id="PTHR33175">
    <property type="entry name" value="DNA-BINDING PROTEIN HU"/>
    <property type="match status" value="1"/>
</dbReference>
<dbReference type="PANTHER" id="PTHR33175:SF5">
    <property type="entry name" value="INTEGRATION HOST FACTOR SUBUNIT BETA"/>
    <property type="match status" value="1"/>
</dbReference>
<dbReference type="Pfam" id="PF00216">
    <property type="entry name" value="Bac_DNA_binding"/>
    <property type="match status" value="1"/>
</dbReference>
<dbReference type="PRINTS" id="PR01727">
    <property type="entry name" value="DNABINDINGHU"/>
</dbReference>
<dbReference type="SMART" id="SM00411">
    <property type="entry name" value="BHL"/>
    <property type="match status" value="1"/>
</dbReference>
<dbReference type="SUPFAM" id="SSF47729">
    <property type="entry name" value="IHF-like DNA-binding proteins"/>
    <property type="match status" value="1"/>
</dbReference>
<dbReference type="PROSITE" id="PS00045">
    <property type="entry name" value="HISTONE_LIKE"/>
    <property type="match status" value="1"/>
</dbReference>
<evidence type="ECO:0000255" key="1">
    <source>
        <dbReference type="HAMAP-Rule" id="MF_00381"/>
    </source>
</evidence>
<evidence type="ECO:0000256" key="2">
    <source>
        <dbReference type="SAM" id="MobiDB-lite"/>
    </source>
</evidence>
<proteinExistence type="inferred from homology"/>
<feature type="chain" id="PRO_1000060642" description="Integration host factor subunit beta">
    <location>
        <begin position="1"/>
        <end position="101"/>
    </location>
</feature>
<feature type="region of interest" description="Disordered" evidence="2">
    <location>
        <begin position="57"/>
        <end position="77"/>
    </location>
</feature>
<sequence length="101" mass="11375">MIKSELVQRIAEHNPHLYQRDVENIVNAILDEIVDALARGDRVELRGFGAFSVKHRPARAGRNPRTGAHVPVDQKSVPFFKTGKEMRERLNRETGDTDTGA</sequence>
<protein>
    <recommendedName>
        <fullName evidence="1">Integration host factor subunit beta</fullName>
        <shortName evidence="1">IHF-beta</shortName>
    </recommendedName>
</protein>
<keyword id="KW-0233">DNA recombination</keyword>
<keyword id="KW-0238">DNA-binding</keyword>
<keyword id="KW-1185">Reference proteome</keyword>
<keyword id="KW-0804">Transcription</keyword>
<keyword id="KW-0805">Transcription regulation</keyword>
<keyword id="KW-0810">Translation regulation</keyword>
<name>IHFB_RHOP2</name>